<dbReference type="EMBL" id="Z46843">
    <property type="protein sequence ID" value="CAA86899.1"/>
    <property type="molecule type" value="Genomic_DNA"/>
</dbReference>
<dbReference type="EMBL" id="Z69382">
    <property type="protein sequence ID" value="CAA93378.1"/>
    <property type="molecule type" value="Genomic_DNA"/>
</dbReference>
<dbReference type="EMBL" id="Z71402">
    <property type="protein sequence ID" value="CAA96007.1"/>
    <property type="molecule type" value="Genomic_DNA"/>
</dbReference>
<dbReference type="EMBL" id="BK006947">
    <property type="protein sequence ID" value="DAA10423.1"/>
    <property type="molecule type" value="Genomic_DNA"/>
</dbReference>
<dbReference type="PIR" id="S59262">
    <property type="entry name" value="S59262"/>
</dbReference>
<dbReference type="RefSeq" id="NP_014273.1">
    <property type="nucleotide sequence ID" value="NM_001182964.1"/>
</dbReference>
<dbReference type="PDB" id="5FLZ">
    <property type="method" value="EM"/>
    <property type="resolution" value="6.90 A"/>
    <property type="chains" value="B=1-846"/>
</dbReference>
<dbReference type="PDB" id="5FM1">
    <property type="method" value="EM"/>
    <property type="resolution" value="8.00 A"/>
    <property type="chains" value="B=1-846"/>
</dbReference>
<dbReference type="PDB" id="7M2W">
    <property type="method" value="EM"/>
    <property type="resolution" value="3.00 A"/>
    <property type="chains" value="F/H=1-846"/>
</dbReference>
<dbReference type="PDB" id="7M2X">
    <property type="method" value="EM"/>
    <property type="resolution" value="3.60 A"/>
    <property type="chains" value="D=1-846"/>
</dbReference>
<dbReference type="PDB" id="7M2Y">
    <property type="method" value="EM"/>
    <property type="resolution" value="4.03 A"/>
    <property type="chains" value="C=1-846"/>
</dbReference>
<dbReference type="PDB" id="7M2Z">
    <property type="method" value="EM"/>
    <property type="resolution" value="3.70 A"/>
    <property type="chains" value="C=1-846"/>
</dbReference>
<dbReference type="PDB" id="8QRY">
    <property type="method" value="X-ray"/>
    <property type="resolution" value="1.87 A"/>
    <property type="chains" value="A=1-95"/>
</dbReference>
<dbReference type="PDB" id="8QV2">
    <property type="method" value="EM"/>
    <property type="resolution" value="9.20 A"/>
    <property type="chains" value="D/F/H/J/L/N/P=1-846"/>
</dbReference>
<dbReference type="PDB" id="8QV3">
    <property type="method" value="EM"/>
    <property type="resolution" value="8.20 A"/>
    <property type="chains" value="F=1-846"/>
</dbReference>
<dbReference type="PDBsum" id="5FLZ"/>
<dbReference type="PDBsum" id="5FM1"/>
<dbReference type="PDBsum" id="7M2W"/>
<dbReference type="PDBsum" id="7M2X"/>
<dbReference type="PDBsum" id="7M2Y"/>
<dbReference type="PDBsum" id="7M2Z"/>
<dbReference type="PDBsum" id="8QRY"/>
<dbReference type="PDBsum" id="8QV2"/>
<dbReference type="PDBsum" id="8QV3"/>
<dbReference type="EMDB" id="EMD-23635"/>
<dbReference type="EMDB" id="EMD-23636"/>
<dbReference type="EMDB" id="EMD-23637"/>
<dbReference type="EMDB" id="EMD-23638"/>
<dbReference type="EMDB" id="EMD-2799"/>
<dbReference type="SMR" id="P53540"/>
<dbReference type="BioGRID" id="35701">
    <property type="interactions" value="154"/>
</dbReference>
<dbReference type="ComplexPortal" id="CPX-1198">
    <property type="entry name" value="Gamma tubulin small complex"/>
</dbReference>
<dbReference type="DIP" id="DIP-938N"/>
<dbReference type="FunCoup" id="P53540">
    <property type="interactions" value="310"/>
</dbReference>
<dbReference type="IntAct" id="P53540">
    <property type="interactions" value="51"/>
</dbReference>
<dbReference type="MINT" id="P53540"/>
<dbReference type="STRING" id="4932.YNL126W"/>
<dbReference type="iPTMnet" id="P53540"/>
<dbReference type="PaxDb" id="4932-YNL126W"/>
<dbReference type="PeptideAtlas" id="P53540"/>
<dbReference type="EnsemblFungi" id="YNL126W_mRNA">
    <property type="protein sequence ID" value="YNL126W"/>
    <property type="gene ID" value="YNL126W"/>
</dbReference>
<dbReference type="GeneID" id="855597"/>
<dbReference type="KEGG" id="sce:YNL126W"/>
<dbReference type="AGR" id="SGD:S000005070"/>
<dbReference type="SGD" id="S000005070">
    <property type="gene designation" value="SPC98"/>
</dbReference>
<dbReference type="VEuPathDB" id="FungiDB:YNL126W"/>
<dbReference type="eggNOG" id="KOG2000">
    <property type="taxonomic scope" value="Eukaryota"/>
</dbReference>
<dbReference type="GeneTree" id="ENSGT00940000157872"/>
<dbReference type="HOGENOM" id="CLU_333507_0_0_1"/>
<dbReference type="InParanoid" id="P53540"/>
<dbReference type="OMA" id="LWRIKKN"/>
<dbReference type="OrthoDB" id="5860513at2759"/>
<dbReference type="BioCyc" id="YEAST:G3O-33147-MONOMER"/>
<dbReference type="BioGRID-ORCS" id="855597">
    <property type="hits" value="1 hit in 10 CRISPR screens"/>
</dbReference>
<dbReference type="CD-CODE" id="876000F7">
    <property type="entry name" value="Centrosome"/>
</dbReference>
<dbReference type="EvolutionaryTrace" id="P53540"/>
<dbReference type="PRO" id="PR:P53540"/>
<dbReference type="Proteomes" id="UP000002311">
    <property type="component" value="Chromosome XIV"/>
</dbReference>
<dbReference type="RNAct" id="P53540">
    <property type="molecule type" value="protein"/>
</dbReference>
<dbReference type="GO" id="GO:0005737">
    <property type="term" value="C:cytoplasm"/>
    <property type="evidence" value="ECO:0007669"/>
    <property type="project" value="UniProtKB-KW"/>
</dbReference>
<dbReference type="GO" id="GO:0000930">
    <property type="term" value="C:gamma-tubulin complex"/>
    <property type="evidence" value="ECO:0000318"/>
    <property type="project" value="GO_Central"/>
</dbReference>
<dbReference type="GO" id="GO:0008275">
    <property type="term" value="C:gamma-tubulin small complex"/>
    <property type="evidence" value="ECO:0000314"/>
    <property type="project" value="SGD"/>
</dbReference>
<dbReference type="GO" id="GO:0005822">
    <property type="term" value="C:inner plaque of spindle pole body"/>
    <property type="evidence" value="ECO:0000314"/>
    <property type="project" value="SGD"/>
</dbReference>
<dbReference type="GO" id="GO:0005874">
    <property type="term" value="C:microtubule"/>
    <property type="evidence" value="ECO:0007669"/>
    <property type="project" value="UniProtKB-KW"/>
</dbReference>
<dbReference type="GO" id="GO:0005634">
    <property type="term" value="C:nucleus"/>
    <property type="evidence" value="ECO:0007669"/>
    <property type="project" value="UniProtKB-SubCell"/>
</dbReference>
<dbReference type="GO" id="GO:0005824">
    <property type="term" value="C:outer plaque of spindle pole body"/>
    <property type="evidence" value="ECO:0000314"/>
    <property type="project" value="SGD"/>
</dbReference>
<dbReference type="GO" id="GO:0000922">
    <property type="term" value="C:spindle pole"/>
    <property type="evidence" value="ECO:0007669"/>
    <property type="project" value="InterPro"/>
</dbReference>
<dbReference type="GO" id="GO:0005816">
    <property type="term" value="C:spindle pole body"/>
    <property type="evidence" value="ECO:0000303"/>
    <property type="project" value="ComplexPortal"/>
</dbReference>
<dbReference type="GO" id="GO:0043015">
    <property type="term" value="F:gamma-tubulin binding"/>
    <property type="evidence" value="ECO:0000315"/>
    <property type="project" value="SGD"/>
</dbReference>
<dbReference type="GO" id="GO:0031122">
    <property type="term" value="P:cytoplasmic microtubule organization"/>
    <property type="evidence" value="ECO:0000318"/>
    <property type="project" value="GO_Central"/>
</dbReference>
<dbReference type="GO" id="GO:0051321">
    <property type="term" value="P:meiotic cell cycle"/>
    <property type="evidence" value="ECO:0000318"/>
    <property type="project" value="GO_Central"/>
</dbReference>
<dbReference type="GO" id="GO:0007020">
    <property type="term" value="P:microtubule nucleation"/>
    <property type="evidence" value="ECO:0000314"/>
    <property type="project" value="SGD"/>
</dbReference>
<dbReference type="GO" id="GO:0000278">
    <property type="term" value="P:mitotic cell cycle"/>
    <property type="evidence" value="ECO:0000318"/>
    <property type="project" value="GO_Central"/>
</dbReference>
<dbReference type="GO" id="GO:0007052">
    <property type="term" value="P:mitotic spindle organization"/>
    <property type="evidence" value="ECO:0000315"/>
    <property type="project" value="SGD"/>
</dbReference>
<dbReference type="GO" id="GO:0010968">
    <property type="term" value="P:regulation of microtubule nucleation"/>
    <property type="evidence" value="ECO:0000269"/>
    <property type="project" value="ComplexPortal"/>
</dbReference>
<dbReference type="GO" id="GO:0051225">
    <property type="term" value="P:spindle assembly"/>
    <property type="evidence" value="ECO:0000318"/>
    <property type="project" value="GO_Central"/>
</dbReference>
<dbReference type="Gene3D" id="1.20.120.1900">
    <property type="entry name" value="Gamma-tubulin complex, C-terminal domain"/>
    <property type="match status" value="1"/>
</dbReference>
<dbReference type="InterPro" id="IPR007259">
    <property type="entry name" value="GCP"/>
</dbReference>
<dbReference type="InterPro" id="IPR040457">
    <property type="entry name" value="GCP_C"/>
</dbReference>
<dbReference type="InterPro" id="IPR042241">
    <property type="entry name" value="GCP_C_sf"/>
</dbReference>
<dbReference type="InterPro" id="IPR041470">
    <property type="entry name" value="GCP_N"/>
</dbReference>
<dbReference type="PANTHER" id="PTHR19302">
    <property type="entry name" value="GAMMA TUBULIN COMPLEX PROTEIN"/>
    <property type="match status" value="1"/>
</dbReference>
<dbReference type="PANTHER" id="PTHR19302:SF33">
    <property type="entry name" value="GAMMA-TUBULIN COMPLEX COMPONENT 5"/>
    <property type="match status" value="1"/>
</dbReference>
<dbReference type="Pfam" id="PF04130">
    <property type="entry name" value="GCP_C_terminal"/>
    <property type="match status" value="1"/>
</dbReference>
<dbReference type="Pfam" id="PF17681">
    <property type="entry name" value="GCP_N_terminal"/>
    <property type="match status" value="1"/>
</dbReference>
<reference key="1">
    <citation type="journal article" date="1995" name="Yeast">
        <title>A 43.5 kb segment of yeast chromosome XIV, which contains MFA2, MEP2, CAP/SRV2, NAM9, FKB1/FPR1/RBP1, MOM22 and CPT1, predicts an adenosine deaminase gene and 14 new open reading frames.</title>
        <authorList>
            <person name="Mallet L."/>
            <person name="Bussereau F."/>
            <person name="Jacquet M."/>
        </authorList>
    </citation>
    <scope>NUCLEOTIDE SEQUENCE [GENOMIC DNA]</scope>
    <source>
        <strain>ATCC 204508 / S288c</strain>
    </source>
</reference>
<reference key="2">
    <citation type="journal article" date="1997" name="Yeast">
        <title>The DNA sequence of cosmid 14-13b from chromosome XIV of Saccharomyces cerevisiae reveals an unusually high number of overlapping open reading frames.</title>
        <authorList>
            <person name="de Antoni A."/>
            <person name="D'Angelo M."/>
            <person name="Dal Pero F."/>
            <person name="Sartorello F."/>
            <person name="Pandolfo D."/>
            <person name="Pallavicini A."/>
            <person name="Lanfranchi G."/>
            <person name="Valle G."/>
        </authorList>
    </citation>
    <scope>NUCLEOTIDE SEQUENCE [GENOMIC DNA]</scope>
</reference>
<reference key="3">
    <citation type="journal article" date="1997" name="Nature">
        <title>The nucleotide sequence of Saccharomyces cerevisiae chromosome XIV and its evolutionary implications.</title>
        <authorList>
            <person name="Philippsen P."/>
            <person name="Kleine K."/>
            <person name="Poehlmann R."/>
            <person name="Duesterhoeft A."/>
            <person name="Hamberg K."/>
            <person name="Hegemann J.H."/>
            <person name="Obermaier B."/>
            <person name="Urrestarazu L.A."/>
            <person name="Aert R."/>
            <person name="Albermann K."/>
            <person name="Altmann R."/>
            <person name="Andre B."/>
            <person name="Baladron V."/>
            <person name="Ballesta J.P.G."/>
            <person name="Becam A.-M."/>
            <person name="Beinhauer J.D."/>
            <person name="Boskovic J."/>
            <person name="Buitrago M.J."/>
            <person name="Bussereau F."/>
            <person name="Coster F."/>
            <person name="Crouzet M."/>
            <person name="D'Angelo M."/>
            <person name="Dal Pero F."/>
            <person name="De Antoni A."/>
            <person name="del Rey F."/>
            <person name="Doignon F."/>
            <person name="Domdey H."/>
            <person name="Dubois E."/>
            <person name="Fiedler T.A."/>
            <person name="Fleig U."/>
            <person name="Floeth M."/>
            <person name="Fritz C."/>
            <person name="Gaillardin C."/>
            <person name="Garcia-Cantalejo J.M."/>
            <person name="Glansdorff N."/>
            <person name="Goffeau A."/>
            <person name="Gueldener U."/>
            <person name="Herbert C.J."/>
            <person name="Heumann K."/>
            <person name="Heuss-Neitzel D."/>
            <person name="Hilbert H."/>
            <person name="Hinni K."/>
            <person name="Iraqui Houssaini I."/>
            <person name="Jacquet M."/>
            <person name="Jimenez A."/>
            <person name="Jonniaux J.-L."/>
            <person name="Karpfinger-Hartl L."/>
            <person name="Lanfranchi G."/>
            <person name="Lepingle A."/>
            <person name="Levesque H."/>
            <person name="Lyck R."/>
            <person name="Maftahi M."/>
            <person name="Mallet L."/>
            <person name="Maurer C.T.C."/>
            <person name="Messenguy F."/>
            <person name="Mewes H.-W."/>
            <person name="Moestl D."/>
            <person name="Nasr F."/>
            <person name="Nicaud J.-M."/>
            <person name="Niedenthal R.K."/>
            <person name="Pandolfo D."/>
            <person name="Pierard A."/>
            <person name="Piravandi E."/>
            <person name="Planta R.J."/>
            <person name="Pohl T.M."/>
            <person name="Purnelle B."/>
            <person name="Rebischung C."/>
            <person name="Remacha M.A."/>
            <person name="Revuelta J.L."/>
            <person name="Rinke M."/>
            <person name="Saiz J.E."/>
            <person name="Sartorello F."/>
            <person name="Scherens B."/>
            <person name="Sen-Gupta M."/>
            <person name="Soler-Mira A."/>
            <person name="Urbanus J.H.M."/>
            <person name="Valle G."/>
            <person name="Van Dyck L."/>
            <person name="Verhasselt P."/>
            <person name="Vierendeels F."/>
            <person name="Vissers S."/>
            <person name="Voet M."/>
            <person name="Volckaert G."/>
            <person name="Wach A."/>
            <person name="Wambutt R."/>
            <person name="Wedler H."/>
            <person name="Zollner A."/>
            <person name="Hani J."/>
        </authorList>
    </citation>
    <scope>NUCLEOTIDE SEQUENCE [LARGE SCALE GENOMIC DNA]</scope>
    <source>
        <strain>ATCC 204508 / S288c</strain>
    </source>
</reference>
<reference key="4">
    <citation type="journal article" date="2014" name="G3 (Bethesda)">
        <title>The reference genome sequence of Saccharomyces cerevisiae: Then and now.</title>
        <authorList>
            <person name="Engel S.R."/>
            <person name="Dietrich F.S."/>
            <person name="Fisk D.G."/>
            <person name="Binkley G."/>
            <person name="Balakrishnan R."/>
            <person name="Costanzo M.C."/>
            <person name="Dwight S.S."/>
            <person name="Hitz B.C."/>
            <person name="Karra K."/>
            <person name="Nash R.S."/>
            <person name="Weng S."/>
            <person name="Wong E.D."/>
            <person name="Lloyd P."/>
            <person name="Skrzypek M.S."/>
            <person name="Miyasato S.R."/>
            <person name="Simison M."/>
            <person name="Cherry J.M."/>
        </authorList>
    </citation>
    <scope>GENOME REANNOTATION</scope>
    <source>
        <strain>ATCC 204508 / S288c</strain>
    </source>
</reference>
<reference key="5">
    <citation type="journal article" date="1996" name="EMBO J.">
        <title>The spindle pole body component Spc98p interacts with the gamma-tubulin-like Tub4p of Saccharomyces cerevisiae at the sites of microtubule attachment.</title>
        <authorList>
            <person name="Geissler S."/>
            <person name="Pereira G."/>
            <person name="Spang A."/>
            <person name="Knop M."/>
            <person name="Soues S."/>
            <person name="Kilmartin J.V."/>
            <person name="Schiebel E."/>
        </authorList>
    </citation>
    <scope>CHARACTERIZATION</scope>
</reference>
<reference key="6">
    <citation type="journal article" date="1998" name="EMBO J.">
        <title>Receptors determine the cellular localization of a gamma-tubulin complex and thereby the site of microtubule formation.</title>
        <authorList>
            <person name="Knop M."/>
            <person name="Schiebel E."/>
        </authorList>
    </citation>
    <scope>INTERACTION WITH SPC72</scope>
</reference>
<reference key="7">
    <citation type="journal article" date="2003" name="Nature">
        <title>Global analysis of protein expression in yeast.</title>
        <authorList>
            <person name="Ghaemmaghami S."/>
            <person name="Huh W.-K."/>
            <person name="Bower K."/>
            <person name="Howson R.W."/>
            <person name="Belle A."/>
            <person name="Dephoure N."/>
            <person name="O'Shea E.K."/>
            <person name="Weissman J.S."/>
        </authorList>
    </citation>
    <scope>LEVEL OF PROTEIN EXPRESSION [LARGE SCALE ANALYSIS]</scope>
</reference>
<reference key="8">
    <citation type="journal article" date="2008" name="Mol. Cell. Proteomics">
        <title>A multidimensional chromatography technology for in-depth phosphoproteome analysis.</title>
        <authorList>
            <person name="Albuquerque C.P."/>
            <person name="Smolka M.B."/>
            <person name="Payne S.H."/>
            <person name="Bafna V."/>
            <person name="Eng J."/>
            <person name="Zhou H."/>
        </authorList>
    </citation>
    <scope>PHOSPHORYLATION [LARGE SCALE ANALYSIS] AT SER-124 AND SER-136</scope>
    <scope>IDENTIFICATION BY MASS SPECTROMETRY [LARGE SCALE ANALYSIS]</scope>
</reference>
<protein>
    <recommendedName>
        <fullName>Spindle pole body component SPC98</fullName>
    </recommendedName>
</protein>
<evidence type="ECO:0000269" key="1">
    <source>
    </source>
</evidence>
<evidence type="ECO:0000269" key="2">
    <source>
    </source>
</evidence>
<evidence type="ECO:0000305" key="3"/>
<evidence type="ECO:0007744" key="4">
    <source>
    </source>
</evidence>
<evidence type="ECO:0007829" key="5">
    <source>
        <dbReference type="PDB" id="7M2W"/>
    </source>
</evidence>
<evidence type="ECO:0007829" key="6">
    <source>
        <dbReference type="PDB" id="8QRY"/>
    </source>
</evidence>
<name>SPC98_YEAST</name>
<comment type="function">
    <text>Involved in microtubule organization by the microtubule organizing center, the spindle pole body (SPB). Probably part of the microtubule attachment site at the SPB.</text>
</comment>
<comment type="subunit">
    <text evidence="2">Interacts with TUB4, SPC72 and SPC97.</text>
</comment>
<comment type="interaction">
    <interactant intactId="EBI-17794">
        <id>P53540</id>
    </interactant>
    <interactant intactId="EBI-17786">
        <id>P38863</id>
        <label>SPC97</label>
    </interactant>
    <organismsDiffer>false</organismsDiffer>
    <experiments>8</experiments>
</comment>
<comment type="interaction">
    <interactant intactId="EBI-17794">
        <id>P53540</id>
    </interactant>
    <interactant intactId="EBI-19013">
        <id>P53378</id>
        <label>TUB4</label>
    </interactant>
    <organismsDiffer>false</organismsDiffer>
    <experiments>4</experiments>
</comment>
<comment type="subcellular location">
    <subcellularLocation>
        <location>Nucleus</location>
    </subcellularLocation>
    <subcellularLocation>
        <location>Cytoplasm</location>
        <location>Cytoskeleton</location>
        <location>Microtubule organizing center</location>
        <location>Spindle pole body</location>
    </subcellularLocation>
</comment>
<comment type="miscellaneous">
    <text evidence="1">Present with 56 molecules/cell in log phase SD medium.</text>
</comment>
<comment type="similarity">
    <text evidence="3">Belongs to the TUBGCP family.</text>
</comment>
<keyword id="KW-0002">3D-structure</keyword>
<keyword id="KW-0963">Cytoplasm</keyword>
<keyword id="KW-0206">Cytoskeleton</keyword>
<keyword id="KW-0493">Microtubule</keyword>
<keyword id="KW-0539">Nucleus</keyword>
<keyword id="KW-0597">Phosphoprotein</keyword>
<keyword id="KW-1185">Reference proteome</keyword>
<proteinExistence type="evidence at protein level"/>
<gene>
    <name type="primary">SPC98</name>
    <name type="ordered locus">YNL126W</name>
    <name type="ORF">N1222</name>
    <name type="ORF">N1879</name>
</gene>
<accession>P53540</accession>
<accession>D6W157</accession>
<feature type="chain" id="PRO_0000078123" description="Spindle pole body component SPC98">
    <location>
        <begin position="1"/>
        <end position="846"/>
    </location>
</feature>
<feature type="modified residue" description="Phosphoserine" evidence="4">
    <location>
        <position position="124"/>
    </location>
</feature>
<feature type="modified residue" description="Phosphoserine" evidence="4">
    <location>
        <position position="136"/>
    </location>
</feature>
<feature type="helix" evidence="6">
    <location>
        <begin position="3"/>
        <end position="14"/>
    </location>
</feature>
<feature type="helix" evidence="6">
    <location>
        <begin position="21"/>
        <end position="35"/>
    </location>
</feature>
<feature type="helix" evidence="6">
    <location>
        <begin position="45"/>
        <end position="53"/>
    </location>
</feature>
<feature type="helix" evidence="6">
    <location>
        <begin position="60"/>
        <end position="76"/>
    </location>
</feature>
<feature type="helix" evidence="6">
    <location>
        <begin position="82"/>
        <end position="92"/>
    </location>
</feature>
<feature type="helix" evidence="5">
    <location>
        <begin position="167"/>
        <end position="171"/>
    </location>
</feature>
<feature type="helix" evidence="5">
    <location>
        <begin position="172"/>
        <end position="175"/>
    </location>
</feature>
<feature type="helix" evidence="5">
    <location>
        <begin position="181"/>
        <end position="191"/>
    </location>
</feature>
<feature type="turn" evidence="5">
    <location>
        <begin position="192"/>
        <end position="194"/>
    </location>
</feature>
<feature type="strand" evidence="5">
    <location>
        <begin position="198"/>
        <end position="200"/>
    </location>
</feature>
<feature type="helix" evidence="5">
    <location>
        <begin position="215"/>
        <end position="241"/>
    </location>
</feature>
<feature type="helix" evidence="5">
    <location>
        <begin position="248"/>
        <end position="274"/>
    </location>
</feature>
<feature type="helix" evidence="5">
    <location>
        <begin position="280"/>
        <end position="286"/>
    </location>
</feature>
<feature type="helix" evidence="5">
    <location>
        <begin position="288"/>
        <end position="300"/>
    </location>
</feature>
<feature type="turn" evidence="5">
    <location>
        <begin position="301"/>
        <end position="303"/>
    </location>
</feature>
<feature type="helix" evidence="5">
    <location>
        <begin position="304"/>
        <end position="306"/>
    </location>
</feature>
<feature type="helix" evidence="5">
    <location>
        <begin position="309"/>
        <end position="319"/>
    </location>
</feature>
<feature type="helix" evidence="5">
    <location>
        <begin position="325"/>
        <end position="352"/>
    </location>
</feature>
<feature type="strand" evidence="5">
    <location>
        <begin position="362"/>
        <end position="366"/>
    </location>
</feature>
<feature type="turn" evidence="5">
    <location>
        <begin position="373"/>
        <end position="376"/>
    </location>
</feature>
<feature type="strand" evidence="5">
    <location>
        <begin position="382"/>
        <end position="385"/>
    </location>
</feature>
<feature type="helix" evidence="5">
    <location>
        <begin position="396"/>
        <end position="414"/>
    </location>
</feature>
<feature type="helix" evidence="5">
    <location>
        <begin position="419"/>
        <end position="434"/>
    </location>
</feature>
<feature type="helix" evidence="5">
    <location>
        <begin position="435"/>
        <end position="439"/>
    </location>
</feature>
<feature type="helix" evidence="5">
    <location>
        <begin position="443"/>
        <end position="466"/>
    </location>
</feature>
<feature type="helix" evidence="5">
    <location>
        <begin position="470"/>
        <end position="480"/>
    </location>
</feature>
<feature type="helix" evidence="5">
    <location>
        <begin position="486"/>
        <end position="500"/>
    </location>
</feature>
<feature type="strand" evidence="5">
    <location>
        <begin position="509"/>
        <end position="511"/>
    </location>
</feature>
<feature type="helix" evidence="5">
    <location>
        <begin position="512"/>
        <end position="521"/>
    </location>
</feature>
<feature type="helix" evidence="5">
    <location>
        <begin position="526"/>
        <end position="529"/>
    </location>
</feature>
<feature type="turn" evidence="5">
    <location>
        <begin position="532"/>
        <end position="534"/>
    </location>
</feature>
<feature type="helix" evidence="5">
    <location>
        <begin position="535"/>
        <end position="539"/>
    </location>
</feature>
<feature type="strand" evidence="5">
    <location>
        <begin position="541"/>
        <end position="545"/>
    </location>
</feature>
<feature type="turn" evidence="5">
    <location>
        <begin position="554"/>
        <end position="557"/>
    </location>
</feature>
<feature type="strand" evidence="5">
    <location>
        <begin position="558"/>
        <end position="562"/>
    </location>
</feature>
<feature type="helix" evidence="5">
    <location>
        <begin position="568"/>
        <end position="570"/>
    </location>
</feature>
<feature type="helix" evidence="5">
    <location>
        <begin position="582"/>
        <end position="615"/>
    </location>
</feature>
<feature type="helix" evidence="5">
    <location>
        <begin position="624"/>
        <end position="655"/>
    </location>
</feature>
<feature type="helix" evidence="5">
    <location>
        <begin position="657"/>
        <end position="668"/>
    </location>
</feature>
<feature type="strand" evidence="5">
    <location>
        <begin position="681"/>
        <end position="683"/>
    </location>
</feature>
<feature type="strand" evidence="5">
    <location>
        <begin position="689"/>
        <end position="693"/>
    </location>
</feature>
<feature type="helix" evidence="5">
    <location>
        <begin position="721"/>
        <end position="736"/>
    </location>
</feature>
<feature type="turn" evidence="5">
    <location>
        <begin position="739"/>
        <end position="741"/>
    </location>
</feature>
<feature type="turn" evidence="5">
    <location>
        <begin position="752"/>
        <end position="754"/>
    </location>
</feature>
<feature type="helix" evidence="5">
    <location>
        <begin position="758"/>
        <end position="792"/>
    </location>
</feature>
<feature type="strand" evidence="5">
    <location>
        <begin position="793"/>
        <end position="797"/>
    </location>
</feature>
<feature type="helix" evidence="5">
    <location>
        <begin position="800"/>
        <end position="831"/>
    </location>
</feature>
<feature type="helix" evidence="5">
    <location>
        <begin position="836"/>
        <end position="844"/>
    </location>
</feature>
<sequence length="846" mass="98227">MELEPTLFGIIEALAPQLLSQSHLQTFVSDVVNLLRSSTKSATQLGPLIDFYKLQSLDSPETTIMWHKIEKFLDALFGIQNTDDMVKYLSVFQSLLPSNYRAKIVQKSSGLNMENLANHEHLLSPVRAPSIYTEASFENMDRFSERRSMVSSPNRYVPSSTYSSVTLRQLSNPYYVNTIPEEDILKYVSYTLLATTSALFPFDHEQIQIPSKIPNFESGLLHLIFEAGLLYQSLGYKVEKFRMLNISPMKKALIIEISEELQNYTAFVNNLVSSGTVVSLKSLYREIYENIIRLRIYCRFTEHLEELSGDTFLIELNIFKSHGDLTIRKIATNLFNSMISLYYEYLMNWLTKGLLRATYGEFFIAENTDTNGTDDDFIYHIPIEFNQERVPAFIPKELAYKIFMIGKSYIFLEKYCKEVQWTNEFSKKYHVLYQSNSYRGISTNFFEIINDQYSEIVNHTNQILNQKFHYRDVVFALKNILLMGKSDFMDALIEKANDILATPSDSLPNYKLTRVLQEAVQLSSLRHLMNSPRNSSVINGLDARVLDLGHGSVGWDVFTLDYILYPPLSLVLNVNRPFGRKEYLRIFNFLWRFKKNNYFYQKEMLKSNDIIRSFKKIRGYNPLIRDIINKLSRISILRTQFQQFNSKMESYYLNCIIEENFKEMTRKLQRTENKSQNQFDLIRLNNGTIELNGILTPKAEVLTKSSSSKPQKHAIEKTLNIDELESVHNTFLTNILSHKLFATNTSEISVGDYSGQPYPTSLVLLLNSVYEFVKVYCNLNDIGYEIFIKMNLNDHEASNGLLGKFNTNLKEIVSQYKNFKDRLYIFRADLKNDGDEELFLLSKSLR</sequence>
<organism>
    <name type="scientific">Saccharomyces cerevisiae (strain ATCC 204508 / S288c)</name>
    <name type="common">Baker's yeast</name>
    <dbReference type="NCBI Taxonomy" id="559292"/>
    <lineage>
        <taxon>Eukaryota</taxon>
        <taxon>Fungi</taxon>
        <taxon>Dikarya</taxon>
        <taxon>Ascomycota</taxon>
        <taxon>Saccharomycotina</taxon>
        <taxon>Saccharomycetes</taxon>
        <taxon>Saccharomycetales</taxon>
        <taxon>Saccharomycetaceae</taxon>
        <taxon>Saccharomyces</taxon>
    </lineage>
</organism>